<comment type="catalytic activity">
    <reaction evidence="1">
        <text>tRNA(His) + L-histidine + ATP = L-histidyl-tRNA(His) + AMP + diphosphate + H(+)</text>
        <dbReference type="Rhea" id="RHEA:17313"/>
        <dbReference type="Rhea" id="RHEA-COMP:9665"/>
        <dbReference type="Rhea" id="RHEA-COMP:9689"/>
        <dbReference type="ChEBI" id="CHEBI:15378"/>
        <dbReference type="ChEBI" id="CHEBI:30616"/>
        <dbReference type="ChEBI" id="CHEBI:33019"/>
        <dbReference type="ChEBI" id="CHEBI:57595"/>
        <dbReference type="ChEBI" id="CHEBI:78442"/>
        <dbReference type="ChEBI" id="CHEBI:78527"/>
        <dbReference type="ChEBI" id="CHEBI:456215"/>
        <dbReference type="EC" id="6.1.1.21"/>
    </reaction>
</comment>
<comment type="subunit">
    <text evidence="1">Homodimer.</text>
</comment>
<comment type="subcellular location">
    <subcellularLocation>
        <location evidence="1">Cytoplasm</location>
    </subcellularLocation>
</comment>
<comment type="similarity">
    <text evidence="1">Belongs to the class-II aminoacyl-tRNA synthetase family.</text>
</comment>
<evidence type="ECO:0000255" key="1">
    <source>
        <dbReference type="HAMAP-Rule" id="MF_00127"/>
    </source>
</evidence>
<accession>B1L097</accession>
<reference key="1">
    <citation type="journal article" date="2007" name="PLoS ONE">
        <title>Analysis of the neurotoxin complex genes in Clostridium botulinum A1-A4 and B1 strains: BoNT/A3, /Ba4 and /B1 clusters are located within plasmids.</title>
        <authorList>
            <person name="Smith T.J."/>
            <person name="Hill K.K."/>
            <person name="Foley B.T."/>
            <person name="Detter J.C."/>
            <person name="Munk A.C."/>
            <person name="Bruce D.C."/>
            <person name="Doggett N.A."/>
            <person name="Smith L.A."/>
            <person name="Marks J.D."/>
            <person name="Xie G."/>
            <person name="Brettin T.S."/>
        </authorList>
    </citation>
    <scope>NUCLEOTIDE SEQUENCE [LARGE SCALE GENOMIC DNA]</scope>
    <source>
        <strain>Loch Maree / Type A3</strain>
    </source>
</reference>
<protein>
    <recommendedName>
        <fullName evidence="1">Histidine--tRNA ligase</fullName>
        <ecNumber evidence="1">6.1.1.21</ecNumber>
    </recommendedName>
    <alternativeName>
        <fullName evidence="1">Histidyl-tRNA synthetase</fullName>
        <shortName evidence="1">HisRS</shortName>
    </alternativeName>
</protein>
<name>SYH_CLOBM</name>
<feature type="chain" id="PRO_1000095542" description="Histidine--tRNA ligase">
    <location>
        <begin position="1"/>
        <end position="415"/>
    </location>
</feature>
<gene>
    <name evidence="1" type="primary">hisS</name>
    <name type="ordered locus">CLK_2448</name>
</gene>
<organism>
    <name type="scientific">Clostridium botulinum (strain Loch Maree / Type A3)</name>
    <dbReference type="NCBI Taxonomy" id="498214"/>
    <lineage>
        <taxon>Bacteria</taxon>
        <taxon>Bacillati</taxon>
        <taxon>Bacillota</taxon>
        <taxon>Clostridia</taxon>
        <taxon>Eubacteriales</taxon>
        <taxon>Clostridiaceae</taxon>
        <taxon>Clostridium</taxon>
    </lineage>
</organism>
<sequence>MSLQAPKGTKDLLPTESYKWQYLENKFRNIAADFGCREIRTPVFEYTELFQRGVGETTDVVQKEMYTFEDKAGRSITLKPEGTSPAVRAFVEGRLFNETQPTKMYYFTPVMRYENVQKGRLRQHHQFGIEIFGAKDASVDAEVISIPVGIYKELGVEGVELNINSIGCPKCRKTYNEALKKYLSKNYDKLCSTCKTRFDKNPLRILDCKVDTCKEIVKDAPIILDYICDECRDHFEALKSYLDVLDIKYKVDPFIVRGLDYYSKTVFEFIIDDITICAGGRYDYLIEEIGGPSMPAVGFGMGIERLLLTLQEKAIEIPEEAYVDLYLGNMGDKAKLEVLKLAKELRDRHIKCEIDHMGKSVKAQMKYANKIGAKYSMVLGEEELNTGKVALKRMEDGQQIEVDIKEIDTLIKVFK</sequence>
<keyword id="KW-0030">Aminoacyl-tRNA synthetase</keyword>
<keyword id="KW-0067">ATP-binding</keyword>
<keyword id="KW-0963">Cytoplasm</keyword>
<keyword id="KW-0436">Ligase</keyword>
<keyword id="KW-0547">Nucleotide-binding</keyword>
<keyword id="KW-0648">Protein biosynthesis</keyword>
<proteinExistence type="inferred from homology"/>
<dbReference type="EC" id="6.1.1.21" evidence="1"/>
<dbReference type="EMBL" id="CP000962">
    <property type="protein sequence ID" value="ACA55605.1"/>
    <property type="molecule type" value="Genomic_DNA"/>
</dbReference>
<dbReference type="RefSeq" id="WP_012343566.1">
    <property type="nucleotide sequence ID" value="NC_010520.1"/>
</dbReference>
<dbReference type="SMR" id="B1L097"/>
<dbReference type="KEGG" id="cbl:CLK_2448"/>
<dbReference type="HOGENOM" id="CLU_025113_1_1_9"/>
<dbReference type="GO" id="GO:0005737">
    <property type="term" value="C:cytoplasm"/>
    <property type="evidence" value="ECO:0007669"/>
    <property type="project" value="UniProtKB-SubCell"/>
</dbReference>
<dbReference type="GO" id="GO:0005524">
    <property type="term" value="F:ATP binding"/>
    <property type="evidence" value="ECO:0007669"/>
    <property type="project" value="UniProtKB-UniRule"/>
</dbReference>
<dbReference type="GO" id="GO:0140096">
    <property type="term" value="F:catalytic activity, acting on a protein"/>
    <property type="evidence" value="ECO:0007669"/>
    <property type="project" value="UniProtKB-ARBA"/>
</dbReference>
<dbReference type="GO" id="GO:0004821">
    <property type="term" value="F:histidine-tRNA ligase activity"/>
    <property type="evidence" value="ECO:0007669"/>
    <property type="project" value="UniProtKB-UniRule"/>
</dbReference>
<dbReference type="GO" id="GO:0016740">
    <property type="term" value="F:transferase activity"/>
    <property type="evidence" value="ECO:0007669"/>
    <property type="project" value="UniProtKB-ARBA"/>
</dbReference>
<dbReference type="GO" id="GO:0006427">
    <property type="term" value="P:histidyl-tRNA aminoacylation"/>
    <property type="evidence" value="ECO:0007669"/>
    <property type="project" value="UniProtKB-UniRule"/>
</dbReference>
<dbReference type="CDD" id="cd00773">
    <property type="entry name" value="HisRS-like_core"/>
    <property type="match status" value="1"/>
</dbReference>
<dbReference type="CDD" id="cd00859">
    <property type="entry name" value="HisRS_anticodon"/>
    <property type="match status" value="1"/>
</dbReference>
<dbReference type="FunFam" id="3.30.930.10:FF:000005">
    <property type="entry name" value="Histidine--tRNA ligase"/>
    <property type="match status" value="1"/>
</dbReference>
<dbReference type="Gene3D" id="3.40.50.800">
    <property type="entry name" value="Anticodon-binding domain"/>
    <property type="match status" value="1"/>
</dbReference>
<dbReference type="Gene3D" id="3.30.930.10">
    <property type="entry name" value="Bira Bifunctional Protein, Domain 2"/>
    <property type="match status" value="1"/>
</dbReference>
<dbReference type="HAMAP" id="MF_00127">
    <property type="entry name" value="His_tRNA_synth"/>
    <property type="match status" value="1"/>
</dbReference>
<dbReference type="InterPro" id="IPR006195">
    <property type="entry name" value="aa-tRNA-synth_II"/>
</dbReference>
<dbReference type="InterPro" id="IPR045864">
    <property type="entry name" value="aa-tRNA-synth_II/BPL/LPL"/>
</dbReference>
<dbReference type="InterPro" id="IPR004154">
    <property type="entry name" value="Anticodon-bd"/>
</dbReference>
<dbReference type="InterPro" id="IPR036621">
    <property type="entry name" value="Anticodon-bd_dom_sf"/>
</dbReference>
<dbReference type="InterPro" id="IPR015807">
    <property type="entry name" value="His-tRNA-ligase"/>
</dbReference>
<dbReference type="InterPro" id="IPR041715">
    <property type="entry name" value="HisRS-like_core"/>
</dbReference>
<dbReference type="InterPro" id="IPR004516">
    <property type="entry name" value="HisRS/HisZ"/>
</dbReference>
<dbReference type="InterPro" id="IPR033656">
    <property type="entry name" value="HisRS_anticodon"/>
</dbReference>
<dbReference type="NCBIfam" id="TIGR00442">
    <property type="entry name" value="hisS"/>
    <property type="match status" value="1"/>
</dbReference>
<dbReference type="PANTHER" id="PTHR43707:SF1">
    <property type="entry name" value="HISTIDINE--TRNA LIGASE, MITOCHONDRIAL-RELATED"/>
    <property type="match status" value="1"/>
</dbReference>
<dbReference type="PANTHER" id="PTHR43707">
    <property type="entry name" value="HISTIDYL-TRNA SYNTHETASE"/>
    <property type="match status" value="1"/>
</dbReference>
<dbReference type="Pfam" id="PF03129">
    <property type="entry name" value="HGTP_anticodon"/>
    <property type="match status" value="1"/>
</dbReference>
<dbReference type="Pfam" id="PF13393">
    <property type="entry name" value="tRNA-synt_His"/>
    <property type="match status" value="1"/>
</dbReference>
<dbReference type="PIRSF" id="PIRSF001549">
    <property type="entry name" value="His-tRNA_synth"/>
    <property type="match status" value="1"/>
</dbReference>
<dbReference type="SUPFAM" id="SSF52954">
    <property type="entry name" value="Class II aaRS ABD-related"/>
    <property type="match status" value="1"/>
</dbReference>
<dbReference type="SUPFAM" id="SSF55681">
    <property type="entry name" value="Class II aaRS and biotin synthetases"/>
    <property type="match status" value="1"/>
</dbReference>
<dbReference type="PROSITE" id="PS50862">
    <property type="entry name" value="AA_TRNA_LIGASE_II"/>
    <property type="match status" value="1"/>
</dbReference>